<sequence length="378" mass="41279">MKILVDENMPYARELFSRLGEVKAVPGRPIPVEELNHADALMVRSVTKVNESLLSGTPINFVGTATAGTDHVDEAWLKQAGIGFSAAPGCNAIAVVEYVFSALLMLAERDGFSLRDRTIGIVGVGNVGSRLQTRLEALGIRTLLCDPPRAARGDEGDFRTLDELVQEADVLTFHTPLYKDGPYKTLHLADETLIRRLKPGAILINACRGPVVDNAALLARLNAGQPLSVVLDVWEGEPDLNVALLEAVDIGTSHIAGYTLEGKARGTTQVFEAYSAFIGREQHVALETLLPAPEFGRITLHGPLDQPTLKRLAHLVYDVRRDDAPLRKVAGIPGEFDKLRKNYLERREWSSLYVMCDDETAAALLCKLGFNAVHHPAH</sequence>
<name>PDXB_SALG2</name>
<dbReference type="EC" id="1.1.1.290" evidence="1"/>
<dbReference type="EMBL" id="AM933173">
    <property type="protein sequence ID" value="CAR38229.1"/>
    <property type="molecule type" value="Genomic_DNA"/>
</dbReference>
<dbReference type="RefSeq" id="WP_000699176.1">
    <property type="nucleotide sequence ID" value="NC_011274.1"/>
</dbReference>
<dbReference type="SMR" id="B5RCJ5"/>
<dbReference type="KEGG" id="seg:SG2400"/>
<dbReference type="HOGENOM" id="CLU_019796_4_0_6"/>
<dbReference type="UniPathway" id="UPA00244">
    <property type="reaction ID" value="UER00310"/>
</dbReference>
<dbReference type="Proteomes" id="UP000008321">
    <property type="component" value="Chromosome"/>
</dbReference>
<dbReference type="GO" id="GO:0005829">
    <property type="term" value="C:cytosol"/>
    <property type="evidence" value="ECO:0007669"/>
    <property type="project" value="TreeGrafter"/>
</dbReference>
<dbReference type="GO" id="GO:0033711">
    <property type="term" value="F:4-phosphoerythronate dehydrogenase activity"/>
    <property type="evidence" value="ECO:0007669"/>
    <property type="project" value="UniProtKB-EC"/>
</dbReference>
<dbReference type="GO" id="GO:0051287">
    <property type="term" value="F:NAD binding"/>
    <property type="evidence" value="ECO:0007669"/>
    <property type="project" value="InterPro"/>
</dbReference>
<dbReference type="GO" id="GO:0046983">
    <property type="term" value="F:protein dimerization activity"/>
    <property type="evidence" value="ECO:0007669"/>
    <property type="project" value="InterPro"/>
</dbReference>
<dbReference type="GO" id="GO:0036001">
    <property type="term" value="P:'de novo' pyridoxal 5'-phosphate biosynthetic process"/>
    <property type="evidence" value="ECO:0007669"/>
    <property type="project" value="TreeGrafter"/>
</dbReference>
<dbReference type="GO" id="GO:0008615">
    <property type="term" value="P:pyridoxine biosynthetic process"/>
    <property type="evidence" value="ECO:0007669"/>
    <property type="project" value="UniProtKB-UniRule"/>
</dbReference>
<dbReference type="CDD" id="cd12158">
    <property type="entry name" value="ErythrP_dh"/>
    <property type="match status" value="1"/>
</dbReference>
<dbReference type="FunFam" id="3.30.1370.170:FF:000001">
    <property type="entry name" value="Erythronate-4-phosphate dehydrogenase"/>
    <property type="match status" value="1"/>
</dbReference>
<dbReference type="FunFam" id="3.40.50.720:FF:000093">
    <property type="entry name" value="Erythronate-4-phosphate dehydrogenase"/>
    <property type="match status" value="1"/>
</dbReference>
<dbReference type="Gene3D" id="3.30.1370.170">
    <property type="match status" value="1"/>
</dbReference>
<dbReference type="Gene3D" id="3.40.50.720">
    <property type="entry name" value="NAD(P)-binding Rossmann-like Domain"/>
    <property type="match status" value="2"/>
</dbReference>
<dbReference type="HAMAP" id="MF_01825">
    <property type="entry name" value="PdxB"/>
    <property type="match status" value="1"/>
</dbReference>
<dbReference type="InterPro" id="IPR006139">
    <property type="entry name" value="D-isomer_2_OHA_DH_cat_dom"/>
</dbReference>
<dbReference type="InterPro" id="IPR029753">
    <property type="entry name" value="D-isomer_DH_CS"/>
</dbReference>
<dbReference type="InterPro" id="IPR029752">
    <property type="entry name" value="D-isomer_DH_CS1"/>
</dbReference>
<dbReference type="InterPro" id="IPR006140">
    <property type="entry name" value="D-isomer_DH_NAD-bd"/>
</dbReference>
<dbReference type="InterPro" id="IPR020921">
    <property type="entry name" value="Erythronate-4-P_DHase"/>
</dbReference>
<dbReference type="InterPro" id="IPR024531">
    <property type="entry name" value="Erythronate-4-P_DHase_dimer"/>
</dbReference>
<dbReference type="InterPro" id="IPR036291">
    <property type="entry name" value="NAD(P)-bd_dom_sf"/>
</dbReference>
<dbReference type="InterPro" id="IPR038251">
    <property type="entry name" value="PdxB_dimer_sf"/>
</dbReference>
<dbReference type="NCBIfam" id="NF001309">
    <property type="entry name" value="PRK00257.1"/>
    <property type="match status" value="1"/>
</dbReference>
<dbReference type="NCBIfam" id="NF011966">
    <property type="entry name" value="PRK15438.1"/>
    <property type="match status" value="1"/>
</dbReference>
<dbReference type="PANTHER" id="PTHR42938">
    <property type="entry name" value="FORMATE DEHYDROGENASE 1"/>
    <property type="match status" value="1"/>
</dbReference>
<dbReference type="PANTHER" id="PTHR42938:SF9">
    <property type="entry name" value="FORMATE DEHYDROGENASE 1"/>
    <property type="match status" value="1"/>
</dbReference>
<dbReference type="Pfam" id="PF00389">
    <property type="entry name" value="2-Hacid_dh"/>
    <property type="match status" value="1"/>
</dbReference>
<dbReference type="Pfam" id="PF02826">
    <property type="entry name" value="2-Hacid_dh_C"/>
    <property type="match status" value="1"/>
</dbReference>
<dbReference type="Pfam" id="PF11890">
    <property type="entry name" value="DUF3410"/>
    <property type="match status" value="1"/>
</dbReference>
<dbReference type="SUPFAM" id="SSF52283">
    <property type="entry name" value="Formate/glycerate dehydrogenase catalytic domain-like"/>
    <property type="match status" value="1"/>
</dbReference>
<dbReference type="SUPFAM" id="SSF51735">
    <property type="entry name" value="NAD(P)-binding Rossmann-fold domains"/>
    <property type="match status" value="1"/>
</dbReference>
<dbReference type="PROSITE" id="PS00065">
    <property type="entry name" value="D_2_HYDROXYACID_DH_1"/>
    <property type="match status" value="1"/>
</dbReference>
<dbReference type="PROSITE" id="PS00671">
    <property type="entry name" value="D_2_HYDROXYACID_DH_3"/>
    <property type="match status" value="1"/>
</dbReference>
<comment type="function">
    <text evidence="1">Catalyzes the oxidation of erythronate-4-phosphate to 3-hydroxy-2-oxo-4-phosphonooxybutanoate.</text>
</comment>
<comment type="catalytic activity">
    <reaction evidence="1">
        <text>4-phospho-D-erythronate + NAD(+) = (R)-3-hydroxy-2-oxo-4-phosphooxybutanoate + NADH + H(+)</text>
        <dbReference type="Rhea" id="RHEA:18829"/>
        <dbReference type="ChEBI" id="CHEBI:15378"/>
        <dbReference type="ChEBI" id="CHEBI:57540"/>
        <dbReference type="ChEBI" id="CHEBI:57945"/>
        <dbReference type="ChEBI" id="CHEBI:58538"/>
        <dbReference type="ChEBI" id="CHEBI:58766"/>
        <dbReference type="EC" id="1.1.1.290"/>
    </reaction>
</comment>
<comment type="pathway">
    <text evidence="1">Cofactor biosynthesis; pyridoxine 5'-phosphate biosynthesis; pyridoxine 5'-phosphate from D-erythrose 4-phosphate: step 2/5.</text>
</comment>
<comment type="subunit">
    <text evidence="1">Homodimer.</text>
</comment>
<comment type="subcellular location">
    <subcellularLocation>
        <location evidence="1">Cytoplasm</location>
    </subcellularLocation>
</comment>
<comment type="similarity">
    <text evidence="1">Belongs to the D-isomer specific 2-hydroxyacid dehydrogenase family. PdxB subfamily.</text>
</comment>
<protein>
    <recommendedName>
        <fullName evidence="1">Erythronate-4-phosphate dehydrogenase</fullName>
        <ecNumber evidence="1">1.1.1.290</ecNumber>
    </recommendedName>
</protein>
<keyword id="KW-0963">Cytoplasm</keyword>
<keyword id="KW-0520">NAD</keyword>
<keyword id="KW-0560">Oxidoreductase</keyword>
<keyword id="KW-0664">Pyridoxine biosynthesis</keyword>
<proteinExistence type="inferred from homology"/>
<reference key="1">
    <citation type="journal article" date="2008" name="Genome Res.">
        <title>Comparative genome analysis of Salmonella enteritidis PT4 and Salmonella gallinarum 287/91 provides insights into evolutionary and host adaptation pathways.</title>
        <authorList>
            <person name="Thomson N.R."/>
            <person name="Clayton D.J."/>
            <person name="Windhorst D."/>
            <person name="Vernikos G."/>
            <person name="Davidson S."/>
            <person name="Churcher C."/>
            <person name="Quail M.A."/>
            <person name="Stevens M."/>
            <person name="Jones M.A."/>
            <person name="Watson M."/>
            <person name="Barron A."/>
            <person name="Layton A."/>
            <person name="Pickard D."/>
            <person name="Kingsley R.A."/>
            <person name="Bignell A."/>
            <person name="Clark L."/>
            <person name="Harris B."/>
            <person name="Ormond D."/>
            <person name="Abdellah Z."/>
            <person name="Brooks K."/>
            <person name="Cherevach I."/>
            <person name="Chillingworth T."/>
            <person name="Woodward J."/>
            <person name="Norberczak H."/>
            <person name="Lord A."/>
            <person name="Arrowsmith C."/>
            <person name="Jagels K."/>
            <person name="Moule S."/>
            <person name="Mungall K."/>
            <person name="Saunders M."/>
            <person name="Whitehead S."/>
            <person name="Chabalgoity J.A."/>
            <person name="Maskell D."/>
            <person name="Humphreys T."/>
            <person name="Roberts M."/>
            <person name="Barrow P.A."/>
            <person name="Dougan G."/>
            <person name="Parkhill J."/>
        </authorList>
    </citation>
    <scope>NUCLEOTIDE SEQUENCE [LARGE SCALE GENOMIC DNA]</scope>
    <source>
        <strain>287/91 / NCTC 13346</strain>
    </source>
</reference>
<evidence type="ECO:0000255" key="1">
    <source>
        <dbReference type="HAMAP-Rule" id="MF_01825"/>
    </source>
</evidence>
<gene>
    <name evidence="1" type="primary">pdxB</name>
    <name type="ordered locus">SG2400</name>
</gene>
<accession>B5RCJ5</accession>
<feature type="chain" id="PRO_1000188277" description="Erythronate-4-phosphate dehydrogenase">
    <location>
        <begin position="1"/>
        <end position="378"/>
    </location>
</feature>
<feature type="active site" evidence="1">
    <location>
        <position position="208"/>
    </location>
</feature>
<feature type="active site" evidence="1">
    <location>
        <position position="237"/>
    </location>
</feature>
<feature type="active site" description="Proton donor" evidence="1">
    <location>
        <position position="254"/>
    </location>
</feature>
<feature type="binding site" evidence="1">
    <location>
        <position position="45"/>
    </location>
    <ligand>
        <name>substrate</name>
    </ligand>
</feature>
<feature type="binding site" evidence="1">
    <location>
        <position position="66"/>
    </location>
    <ligand>
        <name>substrate</name>
    </ligand>
</feature>
<feature type="binding site" evidence="1">
    <location>
        <position position="146"/>
    </location>
    <ligand>
        <name>NAD(+)</name>
        <dbReference type="ChEBI" id="CHEBI:57540"/>
    </ligand>
</feature>
<feature type="binding site" evidence="1">
    <location>
        <position position="175"/>
    </location>
    <ligand>
        <name>NAD(+)</name>
        <dbReference type="ChEBI" id="CHEBI:57540"/>
    </ligand>
</feature>
<feature type="binding site" evidence="1">
    <location>
        <position position="232"/>
    </location>
    <ligand>
        <name>NAD(+)</name>
        <dbReference type="ChEBI" id="CHEBI:57540"/>
    </ligand>
</feature>
<feature type="binding site" evidence="1">
    <location>
        <position position="257"/>
    </location>
    <ligand>
        <name>NAD(+)</name>
        <dbReference type="ChEBI" id="CHEBI:57540"/>
    </ligand>
</feature>
<feature type="binding site" evidence="1">
    <location>
        <position position="258"/>
    </location>
    <ligand>
        <name>substrate</name>
    </ligand>
</feature>
<organism>
    <name type="scientific">Salmonella gallinarum (strain 287/91 / NCTC 13346)</name>
    <dbReference type="NCBI Taxonomy" id="550538"/>
    <lineage>
        <taxon>Bacteria</taxon>
        <taxon>Pseudomonadati</taxon>
        <taxon>Pseudomonadota</taxon>
        <taxon>Gammaproteobacteria</taxon>
        <taxon>Enterobacterales</taxon>
        <taxon>Enterobacteriaceae</taxon>
        <taxon>Salmonella</taxon>
    </lineage>
</organism>